<keyword id="KW-0378">Hydrolase</keyword>
<gene>
    <name type="primary">acyP</name>
    <name type="ordered locus">TV0020</name>
    <name type="ORF">TVG0019502</name>
</gene>
<protein>
    <recommendedName>
        <fullName>Acylphosphatase</fullName>
        <ecNumber>3.6.1.7</ecNumber>
    </recommendedName>
    <alternativeName>
        <fullName>Acylphosphate phosphohydrolase</fullName>
    </alternativeName>
</protein>
<organism>
    <name type="scientific">Thermoplasma volcanium (strain ATCC 51530 / DSM 4299 / JCM 9571 / NBRC 15438 / GSS1)</name>
    <dbReference type="NCBI Taxonomy" id="273116"/>
    <lineage>
        <taxon>Archaea</taxon>
        <taxon>Methanobacteriati</taxon>
        <taxon>Thermoplasmatota</taxon>
        <taxon>Thermoplasmata</taxon>
        <taxon>Thermoplasmatales</taxon>
        <taxon>Thermoplasmataceae</taxon>
        <taxon>Thermoplasma</taxon>
    </lineage>
</organism>
<comment type="catalytic activity">
    <reaction>
        <text>an acyl phosphate + H2O = a carboxylate + phosphate + H(+)</text>
        <dbReference type="Rhea" id="RHEA:14965"/>
        <dbReference type="ChEBI" id="CHEBI:15377"/>
        <dbReference type="ChEBI" id="CHEBI:15378"/>
        <dbReference type="ChEBI" id="CHEBI:29067"/>
        <dbReference type="ChEBI" id="CHEBI:43474"/>
        <dbReference type="ChEBI" id="CHEBI:59918"/>
        <dbReference type="EC" id="3.6.1.7"/>
    </reaction>
</comment>
<comment type="similarity">
    <text evidence="2">Belongs to the acylphosphatase family.</text>
</comment>
<proteinExistence type="inferred from homology"/>
<reference key="1">
    <citation type="journal article" date="2000" name="Proc. Natl. Acad. Sci. U.S.A.">
        <title>Archaeal adaptation to higher temperatures revealed by genomic sequence of Thermoplasma volcanium.</title>
        <authorList>
            <person name="Kawashima T."/>
            <person name="Amano N."/>
            <person name="Koike H."/>
            <person name="Makino S."/>
            <person name="Higuchi S."/>
            <person name="Kawashima-Ohya Y."/>
            <person name="Watanabe K."/>
            <person name="Yamazaki M."/>
            <person name="Kanehori K."/>
            <person name="Kawamoto T."/>
            <person name="Nunoshiba T."/>
            <person name="Yamamoto Y."/>
            <person name="Aramaki H."/>
            <person name="Makino K."/>
            <person name="Suzuki M."/>
        </authorList>
    </citation>
    <scope>NUCLEOTIDE SEQUENCE [LARGE SCALE GENOMIC DNA]</scope>
    <source>
        <strain>ATCC 51530 / DSM 4299 / JCM 9571 / NBRC 15438 / GSS1</strain>
    </source>
</reference>
<dbReference type="EC" id="3.6.1.7"/>
<dbReference type="EMBL" id="BA000011">
    <property type="protein sequence ID" value="BAB59162.1"/>
    <property type="molecule type" value="Genomic_DNA"/>
</dbReference>
<dbReference type="RefSeq" id="WP_010916277.1">
    <property type="nucleotide sequence ID" value="NC_002689.2"/>
</dbReference>
<dbReference type="SMR" id="Q97CT1"/>
<dbReference type="STRING" id="273116.gene:9380785"/>
<dbReference type="PaxDb" id="273116-14324234"/>
<dbReference type="GeneID" id="1441506"/>
<dbReference type="KEGG" id="tvo:TVG0019502"/>
<dbReference type="eggNOG" id="arCOG01674">
    <property type="taxonomic scope" value="Archaea"/>
</dbReference>
<dbReference type="HOGENOM" id="CLU_141932_1_0_2"/>
<dbReference type="OrthoDB" id="6643at2157"/>
<dbReference type="PhylomeDB" id="Q97CT1"/>
<dbReference type="Proteomes" id="UP000001017">
    <property type="component" value="Chromosome"/>
</dbReference>
<dbReference type="GO" id="GO:0003998">
    <property type="term" value="F:acylphosphatase activity"/>
    <property type="evidence" value="ECO:0007669"/>
    <property type="project" value="UniProtKB-EC"/>
</dbReference>
<dbReference type="Gene3D" id="3.30.70.100">
    <property type="match status" value="1"/>
</dbReference>
<dbReference type="InterPro" id="IPR020456">
    <property type="entry name" value="Acylphosphatase"/>
</dbReference>
<dbReference type="InterPro" id="IPR001792">
    <property type="entry name" value="Acylphosphatase-like_dom"/>
</dbReference>
<dbReference type="InterPro" id="IPR036046">
    <property type="entry name" value="Acylphosphatase-like_dom_sf"/>
</dbReference>
<dbReference type="PANTHER" id="PTHR47268">
    <property type="entry name" value="ACYLPHOSPHATASE"/>
    <property type="match status" value="1"/>
</dbReference>
<dbReference type="PANTHER" id="PTHR47268:SF4">
    <property type="entry name" value="ACYLPHOSPHATASE"/>
    <property type="match status" value="1"/>
</dbReference>
<dbReference type="Pfam" id="PF00708">
    <property type="entry name" value="Acylphosphatase"/>
    <property type="match status" value="1"/>
</dbReference>
<dbReference type="PRINTS" id="PR00112">
    <property type="entry name" value="ACYLPHPHTASE"/>
</dbReference>
<dbReference type="SUPFAM" id="SSF54975">
    <property type="entry name" value="Acylphosphatase/BLUF domain-like"/>
    <property type="match status" value="1"/>
</dbReference>
<dbReference type="PROSITE" id="PS51160">
    <property type="entry name" value="ACYLPHOSPHATASE_3"/>
    <property type="match status" value="1"/>
</dbReference>
<sequence length="90" mass="10532">MLTTRRVRFYGRVQGINFRSNTLVKALELGVKGWIKNLPDGSVEALFSGESEQIEKLISYCVSNMPYAEVKRYDVYIEPYTEFQDFQIKR</sequence>
<name>ACYP_THEVO</name>
<accession>Q97CT1</accession>
<feature type="chain" id="PRO_0000326873" description="Acylphosphatase">
    <location>
        <begin position="1"/>
        <end position="90"/>
    </location>
</feature>
<feature type="domain" description="Acylphosphatase-like" evidence="1">
    <location>
        <begin position="4"/>
        <end position="90"/>
    </location>
</feature>
<feature type="active site" evidence="1">
    <location>
        <position position="19"/>
    </location>
</feature>
<feature type="active site" evidence="1">
    <location>
        <position position="37"/>
    </location>
</feature>
<evidence type="ECO:0000255" key="1">
    <source>
        <dbReference type="PROSITE-ProRule" id="PRU00520"/>
    </source>
</evidence>
<evidence type="ECO:0000305" key="2"/>